<evidence type="ECO:0000305" key="1"/>
<evidence type="ECO:0000305" key="2">
    <source>
    </source>
</evidence>
<sequence length="104" mass="12378">MFIYVYHHLCCSRRCRYLFFLNGSASINWTKYCSELLSVRASFSSRISSRTNKIFKHQIFCFPENSISSLFINRMFSLKSFNILRYSCSSRVLQTMSFLMNHLI</sequence>
<protein>
    <recommendedName>
        <fullName>Putative uncharacterized protein YJL032W</fullName>
    </recommendedName>
</protein>
<comment type="miscellaneous">
    <text evidence="1">Partially overlaps BET4.</text>
</comment>
<comment type="caution">
    <text evidence="2">Product of a dubious gene prediction unlikely to encode a functional protein. Because of that it is not part of the S.cerevisiae S288c complete/reference proteome set.</text>
</comment>
<dbReference type="EMBL" id="Z49307">
    <property type="protein sequence ID" value="CAA89322.1"/>
    <property type="molecule type" value="Genomic_DNA"/>
</dbReference>
<dbReference type="EMBL" id="AY558347">
    <property type="protein sequence ID" value="AAS56673.1"/>
    <property type="molecule type" value="Genomic_DNA"/>
</dbReference>
<dbReference type="PIR" id="S56804">
    <property type="entry name" value="S56804"/>
</dbReference>
<dbReference type="DIP" id="DIP-5490N"/>
<dbReference type="PaxDb" id="4932-YJL032W"/>
<dbReference type="EnsemblFungi" id="YJL032W_mRNA">
    <property type="protein sequence ID" value="YJL032W"/>
    <property type="gene ID" value="YJL032W"/>
</dbReference>
<dbReference type="AGR" id="SGD:S000003569"/>
<dbReference type="SGD" id="S000003569">
    <property type="gene designation" value="YJL032W"/>
</dbReference>
<dbReference type="HOGENOM" id="CLU_2252155_0_0_1"/>
<name>YJD2_YEAST</name>
<accession>P47059</accession>
<reference key="1">
    <citation type="journal article" date="1996" name="EMBO J.">
        <title>Complete nucleotide sequence of Saccharomyces cerevisiae chromosome X.</title>
        <authorList>
            <person name="Galibert F."/>
            <person name="Alexandraki D."/>
            <person name="Baur A."/>
            <person name="Boles E."/>
            <person name="Chalwatzis N."/>
            <person name="Chuat J.-C."/>
            <person name="Coster F."/>
            <person name="Cziepluch C."/>
            <person name="de Haan M."/>
            <person name="Domdey H."/>
            <person name="Durand P."/>
            <person name="Entian K.-D."/>
            <person name="Gatius M."/>
            <person name="Goffeau A."/>
            <person name="Grivell L.A."/>
            <person name="Hennemann A."/>
            <person name="Herbert C.J."/>
            <person name="Heumann K."/>
            <person name="Hilger F."/>
            <person name="Hollenberg C.P."/>
            <person name="Huang M.-E."/>
            <person name="Jacq C."/>
            <person name="Jauniaux J.-C."/>
            <person name="Katsoulou C."/>
            <person name="Kirchrath L."/>
            <person name="Kleine K."/>
            <person name="Kordes E."/>
            <person name="Koetter P."/>
            <person name="Liebl S."/>
            <person name="Louis E.J."/>
            <person name="Manus V."/>
            <person name="Mewes H.-W."/>
            <person name="Miosga T."/>
            <person name="Obermaier B."/>
            <person name="Perea J."/>
            <person name="Pohl T.M."/>
            <person name="Portetelle D."/>
            <person name="Pujol A."/>
            <person name="Purnelle B."/>
            <person name="Ramezani Rad M."/>
            <person name="Rasmussen S.W."/>
            <person name="Rose M."/>
            <person name="Rossau R."/>
            <person name="Schaaff-Gerstenschlaeger I."/>
            <person name="Smits P.H.M."/>
            <person name="Scarcez T."/>
            <person name="Soriano N."/>
            <person name="To Van D."/>
            <person name="Tzermia M."/>
            <person name="Van Broekhoven A."/>
            <person name="Vandenbol M."/>
            <person name="Wedler H."/>
            <person name="von Wettstein D."/>
            <person name="Wambutt R."/>
            <person name="Zagulski M."/>
            <person name="Zollner A."/>
            <person name="Karpfinger-Hartl L."/>
        </authorList>
    </citation>
    <scope>NUCLEOTIDE SEQUENCE [LARGE SCALE GENOMIC DNA]</scope>
    <source>
        <strain>ATCC 204508 / S288c</strain>
    </source>
</reference>
<reference key="2">
    <citation type="journal article" date="2014" name="G3 (Bethesda)">
        <title>The reference genome sequence of Saccharomyces cerevisiae: Then and now.</title>
        <authorList>
            <person name="Engel S.R."/>
            <person name="Dietrich F.S."/>
            <person name="Fisk D.G."/>
            <person name="Binkley G."/>
            <person name="Balakrishnan R."/>
            <person name="Costanzo M.C."/>
            <person name="Dwight S.S."/>
            <person name="Hitz B.C."/>
            <person name="Karra K."/>
            <person name="Nash R.S."/>
            <person name="Weng S."/>
            <person name="Wong E.D."/>
            <person name="Lloyd P."/>
            <person name="Skrzypek M.S."/>
            <person name="Miyasato S.R."/>
            <person name="Simison M."/>
            <person name="Cherry J.M."/>
        </authorList>
    </citation>
    <scope>GENOME REANNOTATION</scope>
    <source>
        <strain>ATCC 204508 / S288c</strain>
    </source>
</reference>
<reference key="3">
    <citation type="journal article" date="2007" name="Genome Res.">
        <title>Approaching a complete repository of sequence-verified protein-encoding clones for Saccharomyces cerevisiae.</title>
        <authorList>
            <person name="Hu Y."/>
            <person name="Rolfs A."/>
            <person name="Bhullar B."/>
            <person name="Murthy T.V.S."/>
            <person name="Zhu C."/>
            <person name="Berger M.F."/>
            <person name="Camargo A.A."/>
            <person name="Kelley F."/>
            <person name="McCarron S."/>
            <person name="Jepson D."/>
            <person name="Richardson A."/>
            <person name="Raphael J."/>
            <person name="Moreira D."/>
            <person name="Taycher E."/>
            <person name="Zuo D."/>
            <person name="Mohr S."/>
            <person name="Kane M.F."/>
            <person name="Williamson J."/>
            <person name="Simpson A.J.G."/>
            <person name="Bulyk M.L."/>
            <person name="Harlow E."/>
            <person name="Marsischky G."/>
            <person name="Kolodner R.D."/>
            <person name="LaBaer J."/>
        </authorList>
    </citation>
    <scope>NUCLEOTIDE SEQUENCE [GENOMIC DNA]</scope>
    <source>
        <strain>ATCC 204508 / S288c</strain>
    </source>
</reference>
<gene>
    <name type="ordered locus">YJL032W</name>
    <name type="ORF">J1252</name>
</gene>
<organism>
    <name type="scientific">Saccharomyces cerevisiae (strain ATCC 204508 / S288c)</name>
    <name type="common">Baker's yeast</name>
    <dbReference type="NCBI Taxonomy" id="559292"/>
    <lineage>
        <taxon>Eukaryota</taxon>
        <taxon>Fungi</taxon>
        <taxon>Dikarya</taxon>
        <taxon>Ascomycota</taxon>
        <taxon>Saccharomycotina</taxon>
        <taxon>Saccharomycetes</taxon>
        <taxon>Saccharomycetales</taxon>
        <taxon>Saccharomycetaceae</taxon>
        <taxon>Saccharomyces</taxon>
    </lineage>
</organism>
<feature type="chain" id="PRO_0000203070" description="Putative uncharacterized protein YJL032W">
    <location>
        <begin position="1"/>
        <end position="104"/>
    </location>
</feature>
<proteinExistence type="uncertain"/>